<proteinExistence type="evidence at protein level"/>
<keyword id="KW-0037">Angiogenesis</keyword>
<keyword id="KW-0130">Cell adhesion</keyword>
<keyword id="KW-0963">Cytoplasm</keyword>
<keyword id="KW-1015">Disulfide bond</keyword>
<keyword id="KW-0325">Glycoprotein</keyword>
<keyword id="KW-0654">Proteoglycan</keyword>
<keyword id="KW-1185">Reference proteome</keyword>
<keyword id="KW-0677">Repeat</keyword>
<keyword id="KW-0964">Secreted</keyword>
<keyword id="KW-0732">Signal</keyword>
<keyword id="KW-0768">Sushi</keyword>
<keyword id="KW-0770">Synapse</keyword>
<dbReference type="EMBL" id="CH473969">
    <property type="protein sequence ID" value="EDM07041.1"/>
    <property type="molecule type" value="Genomic_DNA"/>
</dbReference>
<dbReference type="EMBL" id="BC168975">
    <property type="protein sequence ID" value="AAI68975.1"/>
    <property type="molecule type" value="mRNA"/>
</dbReference>
<dbReference type="RefSeq" id="NP_001101713.1">
    <property type="nucleotide sequence ID" value="NM_001108243.2"/>
</dbReference>
<dbReference type="RefSeq" id="XP_017457535.1">
    <property type="nucleotide sequence ID" value="XM_017602046.1"/>
</dbReference>
<dbReference type="RefSeq" id="XP_017457536.1">
    <property type="nucleotide sequence ID" value="XM_017602047.1"/>
</dbReference>
<dbReference type="FunCoup" id="B5DF94">
    <property type="interactions" value="26"/>
</dbReference>
<dbReference type="STRING" id="10116.ENSRNOP00000005020"/>
<dbReference type="GlyGen" id="B5DF94">
    <property type="glycosylation" value="1 site"/>
</dbReference>
<dbReference type="PhosphoSitePlus" id="B5DF94"/>
<dbReference type="PaxDb" id="10116-ENSRNOP00000005020"/>
<dbReference type="Ensembl" id="ENSRNOT00000103433.1">
    <property type="protein sequence ID" value="ENSRNOP00000085502.1"/>
    <property type="gene ID" value="ENSRNOG00000003715.8"/>
</dbReference>
<dbReference type="GeneID" id="317181"/>
<dbReference type="KEGG" id="rno:317181"/>
<dbReference type="AGR" id="RGD:1562444"/>
<dbReference type="CTD" id="27286"/>
<dbReference type="RGD" id="1562444">
    <property type="gene designation" value="Srpx2"/>
</dbReference>
<dbReference type="eggNOG" id="ENOG502QREP">
    <property type="taxonomic scope" value="Eukaryota"/>
</dbReference>
<dbReference type="GeneTree" id="ENSGT00940000159149"/>
<dbReference type="HOGENOM" id="CLU_047011_0_0_1"/>
<dbReference type="InParanoid" id="B5DF94"/>
<dbReference type="OMA" id="EQRDMCE"/>
<dbReference type="PhylomeDB" id="B5DF94"/>
<dbReference type="PRO" id="PR:B5DF94"/>
<dbReference type="Proteomes" id="UP000002494">
    <property type="component" value="Chromosome X"/>
</dbReference>
<dbReference type="Proteomes" id="UP000234681">
    <property type="component" value="Chromosome x"/>
</dbReference>
<dbReference type="Bgee" id="ENSRNOG00000003715">
    <property type="expression patterns" value="Expressed in lung and 13 other cell types or tissues"/>
</dbReference>
<dbReference type="GO" id="GO:0009986">
    <property type="term" value="C:cell surface"/>
    <property type="evidence" value="ECO:0000314"/>
    <property type="project" value="UniProtKB"/>
</dbReference>
<dbReference type="GO" id="GO:0005737">
    <property type="term" value="C:cytoplasm"/>
    <property type="evidence" value="ECO:0000250"/>
    <property type="project" value="UniProtKB"/>
</dbReference>
<dbReference type="GO" id="GO:0060076">
    <property type="term" value="C:excitatory synapse"/>
    <property type="evidence" value="ECO:0000314"/>
    <property type="project" value="UniProtKB"/>
</dbReference>
<dbReference type="GO" id="GO:0005615">
    <property type="term" value="C:extracellular space"/>
    <property type="evidence" value="ECO:0000250"/>
    <property type="project" value="UniProtKB"/>
</dbReference>
<dbReference type="GO" id="GO:0098978">
    <property type="term" value="C:glutamatergic synapse"/>
    <property type="evidence" value="ECO:0000314"/>
    <property type="project" value="SynGO"/>
</dbReference>
<dbReference type="GO" id="GO:0045202">
    <property type="term" value="C:synapse"/>
    <property type="evidence" value="ECO:0000314"/>
    <property type="project" value="SynGO"/>
</dbReference>
<dbReference type="GO" id="GO:0097060">
    <property type="term" value="C:synaptic membrane"/>
    <property type="evidence" value="ECO:0000314"/>
    <property type="project" value="UniProtKB"/>
</dbReference>
<dbReference type="GO" id="GO:0036458">
    <property type="term" value="F:hepatocyte growth factor binding"/>
    <property type="evidence" value="ECO:0000250"/>
    <property type="project" value="UniProtKB"/>
</dbReference>
<dbReference type="GO" id="GO:0042802">
    <property type="term" value="F:identical protein binding"/>
    <property type="evidence" value="ECO:0000250"/>
    <property type="project" value="UniProtKB"/>
</dbReference>
<dbReference type="GO" id="GO:0005102">
    <property type="term" value="F:signaling receptor binding"/>
    <property type="evidence" value="ECO:0000250"/>
    <property type="project" value="UniProtKB"/>
</dbReference>
<dbReference type="GO" id="GO:0001525">
    <property type="term" value="P:angiogenesis"/>
    <property type="evidence" value="ECO:0007669"/>
    <property type="project" value="UniProtKB-KW"/>
</dbReference>
<dbReference type="GO" id="GO:0048870">
    <property type="term" value="P:cell motility"/>
    <property type="evidence" value="ECO:0000250"/>
    <property type="project" value="UniProtKB"/>
</dbReference>
<dbReference type="GO" id="GO:0098609">
    <property type="term" value="P:cell-cell adhesion"/>
    <property type="evidence" value="ECO:0000250"/>
    <property type="project" value="UniProtKB"/>
</dbReference>
<dbReference type="GO" id="GO:0090050">
    <property type="term" value="P:positive regulation of cell migration involved in sprouting angiogenesis"/>
    <property type="evidence" value="ECO:0000250"/>
    <property type="project" value="UniProtKB"/>
</dbReference>
<dbReference type="GO" id="GO:0051965">
    <property type="term" value="P:positive regulation of synapse assembly"/>
    <property type="evidence" value="ECO:0000314"/>
    <property type="project" value="UniProtKB"/>
</dbReference>
<dbReference type="GO" id="GO:0042325">
    <property type="term" value="P:regulation of phosphorylation"/>
    <property type="evidence" value="ECO:0000250"/>
    <property type="project" value="UniProtKB"/>
</dbReference>
<dbReference type="GO" id="GO:0051963">
    <property type="term" value="P:regulation of synapse assembly"/>
    <property type="evidence" value="ECO:0000314"/>
    <property type="project" value="SynGO"/>
</dbReference>
<dbReference type="GO" id="GO:0071625">
    <property type="term" value="P:vocalization behavior"/>
    <property type="evidence" value="ECO:0000266"/>
    <property type="project" value="RGD"/>
</dbReference>
<dbReference type="CDD" id="cd00033">
    <property type="entry name" value="CCP"/>
    <property type="match status" value="3"/>
</dbReference>
<dbReference type="FunFam" id="2.10.70.10:FF:000024">
    <property type="entry name" value="Sushi repeat-containing protein SRPX"/>
    <property type="match status" value="1"/>
</dbReference>
<dbReference type="FunFam" id="2.10.70.10:FF:000073">
    <property type="entry name" value="Sushi repeat-containing protein SRPX2"/>
    <property type="match status" value="1"/>
</dbReference>
<dbReference type="FunFam" id="2.10.70.10:FF:000058">
    <property type="entry name" value="sushi repeat-containing protein SRPX2"/>
    <property type="match status" value="1"/>
</dbReference>
<dbReference type="Gene3D" id="2.10.70.10">
    <property type="entry name" value="Complement Module, domain 1"/>
    <property type="match status" value="3"/>
</dbReference>
<dbReference type="InterPro" id="IPR025232">
    <property type="entry name" value="DUF4174"/>
</dbReference>
<dbReference type="InterPro" id="IPR003410">
    <property type="entry name" value="HYR_dom"/>
</dbReference>
<dbReference type="InterPro" id="IPR043555">
    <property type="entry name" value="SRPX-like"/>
</dbReference>
<dbReference type="InterPro" id="IPR035976">
    <property type="entry name" value="Sushi/SCR/CCP_sf"/>
</dbReference>
<dbReference type="InterPro" id="IPR000436">
    <property type="entry name" value="Sushi_SCR_CCP_dom"/>
</dbReference>
<dbReference type="PANTHER" id="PTHR46343">
    <property type="entry name" value="HYR DOMAIN-CONTAINING PROTEIN"/>
    <property type="match status" value="1"/>
</dbReference>
<dbReference type="PANTHER" id="PTHR46343:SF3">
    <property type="entry name" value="SUSHI REPEAT-CONTAINING PROTEIN SRPX2"/>
    <property type="match status" value="1"/>
</dbReference>
<dbReference type="Pfam" id="PF13778">
    <property type="entry name" value="DUF4174"/>
    <property type="match status" value="1"/>
</dbReference>
<dbReference type="Pfam" id="PF02494">
    <property type="entry name" value="HYR"/>
    <property type="match status" value="1"/>
</dbReference>
<dbReference type="Pfam" id="PF00084">
    <property type="entry name" value="Sushi"/>
    <property type="match status" value="3"/>
</dbReference>
<dbReference type="SMART" id="SM00032">
    <property type="entry name" value="CCP"/>
    <property type="match status" value="3"/>
</dbReference>
<dbReference type="SUPFAM" id="SSF57535">
    <property type="entry name" value="Complement control module/SCR domain"/>
    <property type="match status" value="3"/>
</dbReference>
<dbReference type="PROSITE" id="PS50825">
    <property type="entry name" value="HYR"/>
    <property type="match status" value="1"/>
</dbReference>
<dbReference type="PROSITE" id="PS50923">
    <property type="entry name" value="SUSHI"/>
    <property type="match status" value="3"/>
</dbReference>
<gene>
    <name evidence="9 11" type="primary">Srpx2</name>
</gene>
<feature type="signal peptide" evidence="3">
    <location>
        <begin position="1"/>
        <end position="24"/>
    </location>
</feature>
<feature type="chain" id="PRO_0000425275" description="Sushi repeat-containing protein SRPX2" evidence="3">
    <location>
        <begin position="25"/>
        <end position="466"/>
    </location>
</feature>
<feature type="domain" description="Sushi 1" evidence="5">
    <location>
        <begin position="70"/>
        <end position="120"/>
    </location>
</feature>
<feature type="domain" description="Sushi 2" evidence="5">
    <location>
        <begin position="121"/>
        <end position="179"/>
    </location>
</feature>
<feature type="domain" description="HYR" evidence="4">
    <location>
        <begin position="178"/>
        <end position="262"/>
    </location>
</feature>
<feature type="domain" description="Sushi 3" evidence="5">
    <location>
        <begin position="263"/>
        <end position="322"/>
    </location>
</feature>
<feature type="disulfide bond" evidence="5">
    <location>
        <begin position="72"/>
        <end position="106"/>
    </location>
</feature>
<feature type="disulfide bond" evidence="5">
    <location>
        <begin position="92"/>
        <end position="118"/>
    </location>
</feature>
<feature type="disulfide bond" evidence="5">
    <location>
        <begin position="123"/>
        <end position="164"/>
    </location>
</feature>
<feature type="disulfide bond" evidence="5">
    <location>
        <begin position="150"/>
        <end position="177"/>
    </location>
</feature>
<feature type="disulfide bond" evidence="5">
    <location>
        <begin position="265"/>
        <end position="307"/>
    </location>
</feature>
<feature type="disulfide bond" evidence="5">
    <location>
        <begin position="293"/>
        <end position="320"/>
    </location>
</feature>
<feature type="mutagenesis site" description="Dominant negative; secreted and retains ability to homooligomerize." evidence="6">
    <original>Y</original>
    <variation>S</variation>
    <location>
        <position position="73"/>
    </location>
</feature>
<reference evidence="10" key="1">
    <citation type="submission" date="2005-09" db="EMBL/GenBank/DDBJ databases">
        <authorList>
            <person name="Mural R.J."/>
            <person name="Adams M.D."/>
            <person name="Myers E.W."/>
            <person name="Smith H.O."/>
            <person name="Venter J.C."/>
        </authorList>
    </citation>
    <scope>NUCLEOTIDE SEQUENCE [LARGE SCALE GENOMIC DNA]</scope>
</reference>
<reference evidence="9" key="2">
    <citation type="journal article" date="2004" name="Genome Res.">
        <title>The status, quality, and expansion of the NIH full-length cDNA project: the Mammalian Gene Collection (MGC).</title>
        <authorList>
            <consortium name="The MGC Project Team"/>
        </authorList>
    </citation>
    <scope>NUCLEOTIDE SEQUENCE [LARGE SCALE MRNA]</scope>
    <source>
        <strain evidence="9">Brown Norway/NHsdMcwi</strain>
        <tissue evidence="9">Embryonic brain</tissue>
    </source>
</reference>
<reference evidence="8" key="3">
    <citation type="journal article" date="2013" name="Science">
        <title>The human language-associated gene SRPX2 regulates synapse formation and vocalization in mice.</title>
        <authorList>
            <person name="Sia G.M."/>
            <person name="Clem R.L."/>
            <person name="Huganir R.L."/>
        </authorList>
    </citation>
    <scope>FUNCTION</scope>
    <scope>SUBUNIT</scope>
    <scope>SUBCELLULAR LOCATION</scope>
    <scope>DEVELOPMENTAL STAGE</scope>
    <scope>MUTAGENESIS OF TYR-73</scope>
</reference>
<comment type="function">
    <text evidence="1 2 6">Acts as a ligand for the urokinase plasminogen activator surface receptor. Plays a role in angiogenesis by inducing endothelial cell migration and the formation of vascular network (cords). Involved in cellular migration and adhesion. Increases the phosphorylation levels of FAK. Interacts with and increases the mitogenic activity of HGF (By similarity). Promotes synapse formation.</text>
</comment>
<comment type="subunit">
    <text evidence="1 6">Forms homooligomers. Interacts with PLAUR (via the UPAR/Ly6 domains), ADAMTS4 and CTSB. Interacts with HGF; the interaction increases the mitogenic activity of HGF.</text>
</comment>
<comment type="subcellular location">
    <subcellularLocation>
        <location evidence="1">Secreted</location>
    </subcellularLocation>
    <subcellularLocation>
        <location evidence="1">Cytoplasm</location>
    </subcellularLocation>
    <subcellularLocation>
        <location evidence="6">Cell surface</location>
    </subcellularLocation>
    <subcellularLocation>
        <location evidence="6">Synapse</location>
    </subcellularLocation>
</comment>
<comment type="developmental stage">
    <text evidence="6">Expressed at higher levels in the cerebral cortex of juveniles than adults (at protein level).</text>
</comment>
<comment type="PTM">
    <text evidence="1">Contains chondroitin sulfate chains.</text>
</comment>
<sequence length="466" mass="52853">MKTGSLTQRGALLLLLLLAPAVTPTWYAGSGYSPDESYNEVYAEEVPDTRALDYRVPRWCYTLNIQDGEATCYSPRGGNYHSSLGTRCELSCDRGFRLIGRKSVQCLPSRRWSGTAYCRQMRCHTLPFITSGTYTCTNGMLLDSRCDYSCSSGYHLEGDRSRICMEDGRWSGGEPVCVDIDPPKIRCPHSREKIAEPEKLTARVYWDPPLVKDSADGTITRVTLRGPEPGSHFPEGEHVIRYTAYDRAYNRASCKFIVKVQVRRCPILKPPQHGYLTCSSAGDNYGAICEYHCDGGYERQGTPSRVCQSSRQWSGSPPVCTPMKINVNVNSAAGLLDQFYEKQRLLIVSAPDPSNRYYKMQISMLQQSTCGLDLRHVTIIELVGQPPQEVGRIREQQLSAGIIEELRQFQRLTRSYFNMVLIDKQGIDRERYMEPVTPEEIFTFIDDYLLSNQELARRAEQRDVCE</sequence>
<name>SRPX2_RAT</name>
<organism>
    <name type="scientific">Rattus norvegicus</name>
    <name type="common">Rat</name>
    <dbReference type="NCBI Taxonomy" id="10116"/>
    <lineage>
        <taxon>Eukaryota</taxon>
        <taxon>Metazoa</taxon>
        <taxon>Chordata</taxon>
        <taxon>Craniata</taxon>
        <taxon>Vertebrata</taxon>
        <taxon>Euteleostomi</taxon>
        <taxon>Mammalia</taxon>
        <taxon>Eutheria</taxon>
        <taxon>Euarchontoglires</taxon>
        <taxon>Glires</taxon>
        <taxon>Rodentia</taxon>
        <taxon>Myomorpha</taxon>
        <taxon>Muroidea</taxon>
        <taxon>Muridae</taxon>
        <taxon>Murinae</taxon>
        <taxon>Rattus</taxon>
    </lineage>
</organism>
<evidence type="ECO:0000250" key="1">
    <source>
        <dbReference type="UniProtKB" id="O60687"/>
    </source>
</evidence>
<evidence type="ECO:0000250" key="2">
    <source>
        <dbReference type="UniProtKB" id="Q8R054"/>
    </source>
</evidence>
<evidence type="ECO:0000255" key="3"/>
<evidence type="ECO:0000255" key="4">
    <source>
        <dbReference type="PROSITE-ProRule" id="PRU00113"/>
    </source>
</evidence>
<evidence type="ECO:0000255" key="5">
    <source>
        <dbReference type="PROSITE-ProRule" id="PRU00302"/>
    </source>
</evidence>
<evidence type="ECO:0000269" key="6">
    <source>
    </source>
</evidence>
<evidence type="ECO:0000303" key="7">
    <source>
    </source>
</evidence>
<evidence type="ECO:0000305" key="8"/>
<evidence type="ECO:0000312" key="9">
    <source>
        <dbReference type="EMBL" id="AAI68975.1"/>
    </source>
</evidence>
<evidence type="ECO:0000312" key="10">
    <source>
        <dbReference type="EMBL" id="EDM07041.1"/>
    </source>
</evidence>
<evidence type="ECO:0000312" key="11">
    <source>
        <dbReference type="RGD" id="1562444"/>
    </source>
</evidence>
<protein>
    <recommendedName>
        <fullName evidence="7">Sushi repeat-containing protein SRPX2</fullName>
    </recommendedName>
</protein>
<accession>B5DF94</accession>